<reference evidence="8" key="1">
    <citation type="journal article" date="1998" name="Science">
        <title>Genome sequence of the nematode C. elegans: a platform for investigating biology.</title>
        <authorList>
            <consortium name="The C. elegans sequencing consortium"/>
        </authorList>
    </citation>
    <scope>NUCLEOTIDE SEQUENCE [LARGE SCALE GENOMIC DNA]</scope>
    <source>
        <strain evidence="8">Bristol N2</strain>
    </source>
</reference>
<reference evidence="6" key="2">
    <citation type="journal article" date="1998" name="Genetics">
        <title>A genetic screen for temperature-sensitive cell-division mutants of Caenorhabditis elegans.</title>
        <authorList>
            <person name="O'Connell K.F."/>
            <person name="Leys C.M."/>
            <person name="White J.G."/>
        </authorList>
    </citation>
    <scope>FUNCTION</scope>
    <scope>MUTAGENESIS OF LEU-130</scope>
</reference>
<reference evidence="6" key="3">
    <citation type="journal article" date="2007" name="Genetics">
        <title>SPD-3 is required for spindle alignment in Caenorhabditis elegans embryos and localizes to mitochondria.</title>
        <authorList>
            <person name="Dinkelmann M.V."/>
            <person name="Zhang H."/>
            <person name="Skop A.R."/>
            <person name="White J.G."/>
        </authorList>
    </citation>
    <scope>FUNCTION</scope>
    <scope>SUBCELLULAR LOCATION</scope>
    <scope>DEVELOPMENTAL STAGE</scope>
    <scope>MUTAGENESIS OF LEU-130</scope>
</reference>
<reference evidence="6" key="4">
    <citation type="journal article" date="2013" name="PLoS Genet.">
        <title>Chromosome movements promoted by the mitochondrial protein SPD-3 are required for homology search during Caenorhabditis elegans meiosis.</title>
        <authorList>
            <person name="Labrador L."/>
            <person name="Barroso C."/>
            <person name="Lightfoot J."/>
            <person name="Mueller-Reichert T."/>
            <person name="Flibotte S."/>
            <person name="Taylor J."/>
            <person name="Moerman D.G."/>
            <person name="Villeneuve A.M."/>
            <person name="Martinez-Perez E."/>
        </authorList>
    </citation>
    <scope>FUNCTION</scope>
    <scope>SUBCELLULAR LOCATION</scope>
    <scope>MUTAGENESIS OF 417-HIS--GLU-478</scope>
</reference>
<protein>
    <recommendedName>
        <fullName evidence="9">Spindle defective protein 3</fullName>
    </recommendedName>
</protein>
<accession>Q9TYY7</accession>
<evidence type="ECO:0000255" key="1"/>
<evidence type="ECO:0000269" key="2">
    <source>
    </source>
</evidence>
<evidence type="ECO:0000269" key="3">
    <source>
    </source>
</evidence>
<evidence type="ECO:0000269" key="4">
    <source>
    </source>
</evidence>
<evidence type="ECO:0000303" key="5">
    <source>
    </source>
</evidence>
<evidence type="ECO:0000305" key="6"/>
<evidence type="ECO:0000305" key="7">
    <source>
    </source>
</evidence>
<evidence type="ECO:0000312" key="8">
    <source>
        <dbReference type="Proteomes" id="UP000001940"/>
    </source>
</evidence>
<evidence type="ECO:0000312" key="9">
    <source>
        <dbReference type="WormBase" id="H34C03.1"/>
    </source>
</evidence>
<keyword id="KW-0472">Membrane</keyword>
<keyword id="KW-0496">Mitochondrion</keyword>
<keyword id="KW-1000">Mitochondrion outer membrane</keyword>
<keyword id="KW-1185">Reference proteome</keyword>
<keyword id="KW-0812">Transmembrane</keyword>
<keyword id="KW-1133">Transmembrane helix</keyword>
<dbReference type="EMBL" id="BX284604">
    <property type="protein sequence ID" value="CCD65006.1"/>
    <property type="molecule type" value="Genomic_DNA"/>
</dbReference>
<dbReference type="PIR" id="T33735">
    <property type="entry name" value="T33735"/>
</dbReference>
<dbReference type="RefSeq" id="NP_501036.1">
    <property type="nucleotide sequence ID" value="NM_068635.7"/>
</dbReference>
<dbReference type="SMR" id="Q9TYY7"/>
<dbReference type="FunCoup" id="Q9TYY7">
    <property type="interactions" value="870"/>
</dbReference>
<dbReference type="STRING" id="6239.H34C03.1.1"/>
<dbReference type="PaxDb" id="6239-H34C03.1"/>
<dbReference type="DNASU" id="177438"/>
<dbReference type="EnsemblMetazoa" id="H34C03.1.1">
    <property type="protein sequence ID" value="H34C03.1.1"/>
    <property type="gene ID" value="WBGene00004954"/>
</dbReference>
<dbReference type="GeneID" id="177438"/>
<dbReference type="KEGG" id="cel:CELE_H34C03.1"/>
<dbReference type="AGR" id="WB:WBGene00004954"/>
<dbReference type="CTD" id="177438"/>
<dbReference type="WormBase" id="H34C03.1">
    <property type="protein sequence ID" value="CE19499"/>
    <property type="gene ID" value="WBGene00004954"/>
    <property type="gene designation" value="spd-3"/>
</dbReference>
<dbReference type="eggNOG" id="ENOG502TH1Z">
    <property type="taxonomic scope" value="Eukaryota"/>
</dbReference>
<dbReference type="HOGENOM" id="CLU_571398_0_0_1"/>
<dbReference type="InParanoid" id="Q9TYY7"/>
<dbReference type="OMA" id="AFYTEEM"/>
<dbReference type="OrthoDB" id="5847802at2759"/>
<dbReference type="PRO" id="PR:Q9TYY7"/>
<dbReference type="Proteomes" id="UP000001940">
    <property type="component" value="Chromosome IV"/>
</dbReference>
<dbReference type="Bgee" id="WBGene00004954">
    <property type="expression patterns" value="Expressed in germ line (C elegans) and 4 other cell types or tissues"/>
</dbReference>
<dbReference type="GO" id="GO:0005741">
    <property type="term" value="C:mitochondrial outer membrane"/>
    <property type="evidence" value="ECO:0007669"/>
    <property type="project" value="UniProtKB-SubCell"/>
</dbReference>
<dbReference type="GO" id="GO:0005739">
    <property type="term" value="C:mitochondrion"/>
    <property type="evidence" value="ECO:0000314"/>
    <property type="project" value="WormBase"/>
</dbReference>
<dbReference type="GO" id="GO:0090220">
    <property type="term" value="P:chromosome localization to nuclear envelope involved in homologous chromosome segregation"/>
    <property type="evidence" value="ECO:0000315"/>
    <property type="project" value="UniProtKB"/>
</dbReference>
<dbReference type="GO" id="GO:0009792">
    <property type="term" value="P:embryo development ending in birth or egg hatching"/>
    <property type="evidence" value="ECO:0000315"/>
    <property type="project" value="WormBase"/>
</dbReference>
<dbReference type="GO" id="GO:0007129">
    <property type="term" value="P:homologous chromosome pairing at meiosis"/>
    <property type="evidence" value="ECO:0000315"/>
    <property type="project" value="UniProtKB"/>
</dbReference>
<dbReference type="GO" id="GO:0000226">
    <property type="term" value="P:microtubule cytoskeleton organization"/>
    <property type="evidence" value="ECO:0000315"/>
    <property type="project" value="WormBase"/>
</dbReference>
<dbReference type="GO" id="GO:0040025">
    <property type="term" value="P:vulval development"/>
    <property type="evidence" value="ECO:0000315"/>
    <property type="project" value="WormBase"/>
</dbReference>
<gene>
    <name evidence="5 9" type="primary">spd-3</name>
    <name evidence="9" type="ORF">H34C03.1</name>
</gene>
<sequence>MDQMTVEEKILEHQELEDGSSSFRWLVSSTVIAIGGATVALYISGKIDWKIPAIEAGLALTAGGTITCGYLWFKKRVKTVRKLILQMNKTRSALRKRRQIFFSISMCMPRHRHPSILRACRLTVSAIECLTEETKSLNNGTTWQDLYTDEIREIISRSTVDSQLLKIEEIQEGDNDKMDFEQVFETLISIFKLHASEYSRVVILNFLNSPVFESKKVSKFFETLGRLQELMYNLESVERLALKTETKLSRNERKMDGKMKNKSLLELGWKQQTALALEAILERLESESVTQSEVESALHKTFLVVKAEPAFPQPVKKIDVEVKNQDQKNPEVIVIEKGTGERTDIDMVFEGTPLSEADKLSASKSAVARDVLLDGSEGRCHEASLFGELKMVLEPRRTDFAKRERTALAKFYGVDEHQLEQKEDEETFEAIASGDGEDPDPYDWRKDAEMSAGIHHDANNDDFLKSLKLRRVDDDIIE</sequence>
<proteinExistence type="evidence at protein level"/>
<comment type="function">
    <text evidence="2 3 4">In the first mitotic division in embryos, required for mitotic spindle alignment and asymmetric cell division (PubMed:17947426, PubMed:9649522). Required for motor-driven chromosome movement and homolog searching within the nucleus, and subsequently ensures homologous chromosome pairing during the prophase stage of meiosis (PubMed:23671424).</text>
</comment>
<comment type="subcellular location">
    <subcellularLocation>
        <location evidence="2 3">Mitochondrion</location>
    </subcellularLocation>
    <subcellularLocation>
        <location evidence="7">Mitochondrion outer membrane</location>
        <topology evidence="1">Multi-pass membrane protein</topology>
    </subcellularLocation>
    <text evidence="2 3">Localizes to mitochondria throughout interphase and mitosis (PubMed:17947426, PubMed:23671424). Localizes to mitochondria in the pachytene and transition zone regions of the germ cells (PubMed:23671424).</text>
</comment>
<comment type="developmental stage">
    <text evidence="2">Expressed in embryos.</text>
</comment>
<organism evidence="8">
    <name type="scientific">Caenorhabditis elegans</name>
    <dbReference type="NCBI Taxonomy" id="6239"/>
    <lineage>
        <taxon>Eukaryota</taxon>
        <taxon>Metazoa</taxon>
        <taxon>Ecdysozoa</taxon>
        <taxon>Nematoda</taxon>
        <taxon>Chromadorea</taxon>
        <taxon>Rhabditida</taxon>
        <taxon>Rhabditina</taxon>
        <taxon>Rhabditomorpha</taxon>
        <taxon>Rhabditoidea</taxon>
        <taxon>Rhabditidae</taxon>
        <taxon>Peloderinae</taxon>
        <taxon>Caenorhabditis</taxon>
    </lineage>
</organism>
<name>SPD3_CAEEL</name>
<feature type="chain" id="PRO_0000451404" description="Spindle defective protein 3">
    <location>
        <begin position="1"/>
        <end position="478"/>
    </location>
</feature>
<feature type="topological domain" description="Cytoplasmic" evidence="6">
    <location>
        <begin position="1"/>
        <end position="24"/>
    </location>
</feature>
<feature type="transmembrane region" description="Helical; Name=1" evidence="1">
    <location>
        <begin position="25"/>
        <end position="45"/>
    </location>
</feature>
<feature type="topological domain" description="Extracellular" evidence="6">
    <location>
        <begin position="46"/>
        <end position="52"/>
    </location>
</feature>
<feature type="transmembrane region" description="Helical; Name=2" evidence="1">
    <location>
        <begin position="53"/>
        <end position="73"/>
    </location>
</feature>
<feature type="topological domain" description="Cytoplasmic" evidence="6">
    <location>
        <begin position="74"/>
        <end position="478"/>
    </location>
</feature>
<feature type="mutagenesis site" description="In oj35; reduces growth rate and results in vulval defects. Produces dead eggs at a restrictive temperature. Defective cell division and cytokinesis during embryogenesis. Fails to extrude extra maternal pronuclei and displays abnormally large polar bodies following alignment of the meiotic spindle. Delayed maternal pronuclear migration, and paternal pronuclear envelope decay near the posterior cortex prior to the pronuclei meeting. Defective orientation of the first mitotic spindle where the mitotic spindle aligns transversely to the anterior-posterior axis. This leads to a mispositioned cleavage plane that does not coordinate with the polarity axis, and results in a failure of the asymmetric division. Astral microtubules are excessive in length as compared to wild-type and make contact with the cortex and continue to grow along it. Embryonic localization of dnc-1 to the centrosomes, along spindle microtubules, and to the plus ends of astral microtubules is similar to wild-type, but it is enriched at posterior structures resembling P granules. In addition, dnc-2 is enriched in the pericentriolar region, the mitotic spindle and cytoplasm. 40% increase in ATP concentration compared to wild-type. The egg lethality and spindle rotation defects are suppressed in a smg-1 RNAi mutant background." evidence="2 4">
    <original>L</original>
    <variation>F</variation>
    <location>
        <position position="130"/>
    </location>
</feature>
<feature type="mutagenesis site" description="In me85; late onset mitotic defects where old adults display enlarged nuclei in the mitotic region of the germ line. The number of these enlarged nuclei increases with age. Defective homologous chromosome pairing evident by nuclei with variable degrees of chromosome clustering persisting into the pachytene region. Diakinesis oocytes do form chiasmata as in wild-type, but in contrast to wild-type, the number of chiasmata decreases with age. X-chromosomes are frequently involved in non-homologous synapses. Increases the number of sun-1-positive foci in transition zone nuclei during meiotic prophase, but these foci fail to form large aggregates, have reduced movement and reduced number of fusion events. Lower basal rate of oxygen consumption." evidence="3">
    <location>
        <begin position="417"/>
        <end position="478"/>
    </location>
</feature>